<comment type="function">
    <text evidence="1">Catalyzes the reversible cyclization of carbamoyl aspartate to dihydroorotate.</text>
</comment>
<comment type="catalytic activity">
    <reaction evidence="1">
        <text>(S)-dihydroorotate + H2O = N-carbamoyl-L-aspartate + H(+)</text>
        <dbReference type="Rhea" id="RHEA:24296"/>
        <dbReference type="ChEBI" id="CHEBI:15377"/>
        <dbReference type="ChEBI" id="CHEBI:15378"/>
        <dbReference type="ChEBI" id="CHEBI:30864"/>
        <dbReference type="ChEBI" id="CHEBI:32814"/>
        <dbReference type="EC" id="3.5.2.3"/>
    </reaction>
</comment>
<comment type="cofactor">
    <cofactor evidence="1">
        <name>Zn(2+)</name>
        <dbReference type="ChEBI" id="CHEBI:29105"/>
    </cofactor>
    <text evidence="1">Binds 2 Zn(2+) ions per subunit.</text>
</comment>
<comment type="pathway">
    <text evidence="1">Pyrimidine metabolism; UMP biosynthesis via de novo pathway; (S)-dihydroorotate from bicarbonate: step 3/3.</text>
</comment>
<comment type="similarity">
    <text evidence="1">Belongs to the metallo-dependent hydrolases superfamily. DHOase family. Class I DHOase subfamily.</text>
</comment>
<reference key="1">
    <citation type="journal article" date="2006" name="Proc. Natl. Acad. Sci. U.S.A.">
        <title>Multireplicon genome architecture of Lactobacillus salivarius.</title>
        <authorList>
            <person name="Claesson M.J."/>
            <person name="Li Y."/>
            <person name="Leahy S."/>
            <person name="Canchaya C."/>
            <person name="van Pijkeren J.P."/>
            <person name="Cerdeno-Tarraga A.M."/>
            <person name="Parkhill J."/>
            <person name="Flynn S."/>
            <person name="O'Sullivan G.C."/>
            <person name="Collins J.K."/>
            <person name="Higgins D."/>
            <person name="Shanahan F."/>
            <person name="Fitzgerald G.F."/>
            <person name="van Sinderen D."/>
            <person name="O'Toole P.W."/>
        </authorList>
    </citation>
    <scope>NUCLEOTIDE SEQUENCE [LARGE SCALE GENOMIC DNA]</scope>
    <source>
        <strain>UCC118</strain>
    </source>
</reference>
<feature type="chain" id="PRO_1000024091" description="Dihydroorotase">
    <location>
        <begin position="1"/>
        <end position="429"/>
    </location>
</feature>
<feature type="active site" evidence="1">
    <location>
        <position position="306"/>
    </location>
</feature>
<feature type="binding site" evidence="1">
    <location>
        <position position="61"/>
    </location>
    <ligand>
        <name>Zn(2+)</name>
        <dbReference type="ChEBI" id="CHEBI:29105"/>
        <label>1</label>
    </ligand>
</feature>
<feature type="binding site" evidence="1">
    <location>
        <begin position="63"/>
        <end position="65"/>
    </location>
    <ligand>
        <name>substrate</name>
    </ligand>
</feature>
<feature type="binding site" evidence="1">
    <location>
        <position position="63"/>
    </location>
    <ligand>
        <name>Zn(2+)</name>
        <dbReference type="ChEBI" id="CHEBI:29105"/>
        <label>1</label>
    </ligand>
</feature>
<feature type="binding site" evidence="1">
    <location>
        <position position="95"/>
    </location>
    <ligand>
        <name>substrate</name>
    </ligand>
</feature>
<feature type="binding site" evidence="1">
    <location>
        <position position="153"/>
    </location>
    <ligand>
        <name>Zn(2+)</name>
        <dbReference type="ChEBI" id="CHEBI:29105"/>
        <label>1</label>
    </ligand>
</feature>
<feature type="binding site" evidence="1">
    <location>
        <position position="153"/>
    </location>
    <ligand>
        <name>Zn(2+)</name>
        <dbReference type="ChEBI" id="CHEBI:29105"/>
        <label>2</label>
    </ligand>
</feature>
<feature type="binding site" evidence="1">
    <location>
        <position position="180"/>
    </location>
    <ligand>
        <name>Zn(2+)</name>
        <dbReference type="ChEBI" id="CHEBI:29105"/>
        <label>2</label>
    </ligand>
</feature>
<feature type="binding site" evidence="1">
    <location>
        <position position="233"/>
    </location>
    <ligand>
        <name>Zn(2+)</name>
        <dbReference type="ChEBI" id="CHEBI:29105"/>
        <label>2</label>
    </ligand>
</feature>
<feature type="binding site" evidence="1">
    <location>
        <position position="279"/>
    </location>
    <ligand>
        <name>substrate</name>
    </ligand>
</feature>
<feature type="binding site" evidence="1">
    <location>
        <position position="306"/>
    </location>
    <ligand>
        <name>Zn(2+)</name>
        <dbReference type="ChEBI" id="CHEBI:29105"/>
        <label>1</label>
    </ligand>
</feature>
<feature type="binding site" evidence="1">
    <location>
        <position position="310"/>
    </location>
    <ligand>
        <name>substrate</name>
    </ligand>
</feature>
<feature type="binding site" evidence="1">
    <location>
        <begin position="324"/>
        <end position="325"/>
    </location>
    <ligand>
        <name>substrate</name>
    </ligand>
</feature>
<keyword id="KW-0378">Hydrolase</keyword>
<keyword id="KW-0479">Metal-binding</keyword>
<keyword id="KW-0665">Pyrimidine biosynthesis</keyword>
<keyword id="KW-1185">Reference proteome</keyword>
<keyword id="KW-0862">Zinc</keyword>
<sequence>MATLIKNGNLYQAGRIYQADVLIEDGKIKAIGKNLSDVVKENLVEIDATNKLVAPGLVDVHVHYRDPGFTYKETIHTGSLAAAHGGYTTVCAMPNLDPVPDTPELVEKMCSRNQEDGVVKVKQYGSITHGLKSEELVDFVGMKKAGAFAFSNDGSGVQTAGTMYQAMKSAAALNMAIVAHVEDNSLLFGGVMNAGKRADELGLPGILGISESSQIARDLLLAKETGVHYHVCHVSTKESVELVRLAKQHKINVTCEVSPHHLLLADVDIPGNDPYYKMNPPLRGVEDRQALIDSLLDGTIDMIATDHAPHSIDEKTGDMREASFGITGSETAFAMLYTKFVKTGIFTLEQLLQWMSINPAEKFGMEDAGELLPGKSADLAIFDLNKEYVIKEEDYLSKGINTPFTGEKVYGQTVLTMVDGQKVYQREEK</sequence>
<name>PYRC_LIGS1</name>
<accession>Q1WVB1</accession>
<evidence type="ECO:0000255" key="1">
    <source>
        <dbReference type="HAMAP-Rule" id="MF_00220"/>
    </source>
</evidence>
<dbReference type="EC" id="3.5.2.3" evidence="1"/>
<dbReference type="EMBL" id="CP000233">
    <property type="protein sequence ID" value="ABD99006.1"/>
    <property type="molecule type" value="Genomic_DNA"/>
</dbReference>
<dbReference type="RefSeq" id="WP_011475572.1">
    <property type="nucleotide sequence ID" value="NC_007929.1"/>
</dbReference>
<dbReference type="RefSeq" id="YP_535089.1">
    <property type="nucleotide sequence ID" value="NC_007929.1"/>
</dbReference>
<dbReference type="SMR" id="Q1WVB1"/>
<dbReference type="STRING" id="362948.LSL_0191"/>
<dbReference type="KEGG" id="lsl:LSL_0191"/>
<dbReference type="PATRIC" id="fig|362948.14.peg.268"/>
<dbReference type="HOGENOM" id="CLU_015572_1_0_9"/>
<dbReference type="OrthoDB" id="9765462at2"/>
<dbReference type="UniPathway" id="UPA00070">
    <property type="reaction ID" value="UER00117"/>
</dbReference>
<dbReference type="Proteomes" id="UP000006559">
    <property type="component" value="Chromosome"/>
</dbReference>
<dbReference type="GO" id="GO:0005737">
    <property type="term" value="C:cytoplasm"/>
    <property type="evidence" value="ECO:0007669"/>
    <property type="project" value="TreeGrafter"/>
</dbReference>
<dbReference type="GO" id="GO:0004038">
    <property type="term" value="F:allantoinase activity"/>
    <property type="evidence" value="ECO:0007669"/>
    <property type="project" value="TreeGrafter"/>
</dbReference>
<dbReference type="GO" id="GO:0004151">
    <property type="term" value="F:dihydroorotase activity"/>
    <property type="evidence" value="ECO:0007669"/>
    <property type="project" value="UniProtKB-UniRule"/>
</dbReference>
<dbReference type="GO" id="GO:0008270">
    <property type="term" value="F:zinc ion binding"/>
    <property type="evidence" value="ECO:0007669"/>
    <property type="project" value="UniProtKB-UniRule"/>
</dbReference>
<dbReference type="GO" id="GO:0044205">
    <property type="term" value="P:'de novo' UMP biosynthetic process"/>
    <property type="evidence" value="ECO:0007669"/>
    <property type="project" value="UniProtKB-UniRule"/>
</dbReference>
<dbReference type="GO" id="GO:0006145">
    <property type="term" value="P:purine nucleobase catabolic process"/>
    <property type="evidence" value="ECO:0007669"/>
    <property type="project" value="TreeGrafter"/>
</dbReference>
<dbReference type="CDD" id="cd01317">
    <property type="entry name" value="DHOase_IIa"/>
    <property type="match status" value="1"/>
</dbReference>
<dbReference type="Gene3D" id="3.20.20.140">
    <property type="entry name" value="Metal-dependent hydrolases"/>
    <property type="match status" value="1"/>
</dbReference>
<dbReference type="HAMAP" id="MF_00220_B">
    <property type="entry name" value="PyrC_classI_B"/>
    <property type="match status" value="1"/>
</dbReference>
<dbReference type="InterPro" id="IPR006680">
    <property type="entry name" value="Amidohydro-rel"/>
</dbReference>
<dbReference type="InterPro" id="IPR004722">
    <property type="entry name" value="DHOase"/>
</dbReference>
<dbReference type="InterPro" id="IPR050138">
    <property type="entry name" value="DHOase/Allantoinase_Hydrolase"/>
</dbReference>
<dbReference type="InterPro" id="IPR002195">
    <property type="entry name" value="Dihydroorotase_CS"/>
</dbReference>
<dbReference type="InterPro" id="IPR011059">
    <property type="entry name" value="Metal-dep_hydrolase_composite"/>
</dbReference>
<dbReference type="InterPro" id="IPR032466">
    <property type="entry name" value="Metal_Hydrolase"/>
</dbReference>
<dbReference type="NCBIfam" id="NF006837">
    <property type="entry name" value="PRK09357.1-2"/>
    <property type="match status" value="1"/>
</dbReference>
<dbReference type="NCBIfam" id="TIGR00857">
    <property type="entry name" value="pyrC_multi"/>
    <property type="match status" value="1"/>
</dbReference>
<dbReference type="PANTHER" id="PTHR43668">
    <property type="entry name" value="ALLANTOINASE"/>
    <property type="match status" value="1"/>
</dbReference>
<dbReference type="PANTHER" id="PTHR43668:SF2">
    <property type="entry name" value="ALLANTOINASE"/>
    <property type="match status" value="1"/>
</dbReference>
<dbReference type="Pfam" id="PF01979">
    <property type="entry name" value="Amidohydro_1"/>
    <property type="match status" value="1"/>
</dbReference>
<dbReference type="SUPFAM" id="SSF51338">
    <property type="entry name" value="Composite domain of metallo-dependent hydrolases"/>
    <property type="match status" value="1"/>
</dbReference>
<dbReference type="SUPFAM" id="SSF51556">
    <property type="entry name" value="Metallo-dependent hydrolases"/>
    <property type="match status" value="1"/>
</dbReference>
<dbReference type="PROSITE" id="PS00483">
    <property type="entry name" value="DIHYDROOROTASE_2"/>
    <property type="match status" value="1"/>
</dbReference>
<organism>
    <name type="scientific">Ligilactobacillus salivarius (strain UCC118)</name>
    <name type="common">Lactobacillus salivarius</name>
    <dbReference type="NCBI Taxonomy" id="362948"/>
    <lineage>
        <taxon>Bacteria</taxon>
        <taxon>Bacillati</taxon>
        <taxon>Bacillota</taxon>
        <taxon>Bacilli</taxon>
        <taxon>Lactobacillales</taxon>
        <taxon>Lactobacillaceae</taxon>
        <taxon>Ligilactobacillus</taxon>
    </lineage>
</organism>
<protein>
    <recommendedName>
        <fullName evidence="1">Dihydroorotase</fullName>
        <shortName evidence="1">DHOase</shortName>
        <ecNumber evidence="1">3.5.2.3</ecNumber>
    </recommendedName>
</protein>
<proteinExistence type="inferred from homology"/>
<gene>
    <name evidence="1" type="primary">pyrC</name>
    <name type="ordered locus">LSL_0191</name>
</gene>